<keyword id="KW-0256">Endoplasmic reticulum</keyword>
<keyword id="KW-0349">Heme</keyword>
<keyword id="KW-0408">Iron</keyword>
<keyword id="KW-0443">Lipid metabolism</keyword>
<keyword id="KW-0472">Membrane</keyword>
<keyword id="KW-0479">Metal-binding</keyword>
<keyword id="KW-0492">Microsome</keyword>
<keyword id="KW-0503">Monooxygenase</keyword>
<keyword id="KW-0560">Oxidoreductase</keyword>
<keyword id="KW-0812">Transmembrane</keyword>
<keyword id="KW-1133">Transmembrane helix</keyword>
<protein>
    <recommendedName>
        <fullName evidence="4">Aromatase</fullName>
        <ecNumber evidence="2">1.14.14.14</ecNumber>
    </recommendedName>
    <alternativeName>
        <fullName>CYPXIX</fullName>
    </alternativeName>
    <alternativeName>
        <fullName>Cytochrome P-450AROM</fullName>
    </alternativeName>
    <alternativeName>
        <fullName>Cytochrome P450 19A1</fullName>
    </alternativeName>
    <alternativeName>
        <fullName>Estrogen synthase</fullName>
    </alternativeName>
</protein>
<accession>Q69FB6</accession>
<evidence type="ECO:0000250" key="1"/>
<evidence type="ECO:0000250" key="2">
    <source>
        <dbReference type="UniProtKB" id="P11511"/>
    </source>
</evidence>
<evidence type="ECO:0000255" key="3"/>
<evidence type="ECO:0000303" key="4">
    <source>
    </source>
</evidence>
<evidence type="ECO:0000305" key="5"/>
<organism>
    <name type="scientific">Leucopleurus acutus</name>
    <name type="common">Atlantic white-sided dolphin</name>
    <name type="synonym">Lagenorhynchus acutus</name>
    <dbReference type="NCBI Taxonomy" id="3371109"/>
    <lineage>
        <taxon>Eukaryota</taxon>
        <taxon>Metazoa</taxon>
        <taxon>Chordata</taxon>
        <taxon>Craniata</taxon>
        <taxon>Vertebrata</taxon>
        <taxon>Euteleostomi</taxon>
        <taxon>Mammalia</taxon>
        <taxon>Eutheria</taxon>
        <taxon>Laurasiatheria</taxon>
        <taxon>Artiodactyla</taxon>
        <taxon>Whippomorpha</taxon>
        <taxon>Cetacea</taxon>
        <taxon>Odontoceti</taxon>
        <taxon>Delphinidae</taxon>
        <taxon>Leucopleurus</taxon>
    </lineage>
</organism>
<dbReference type="EC" id="1.14.14.14" evidence="2"/>
<dbReference type="EMBL" id="AY341076">
    <property type="protein sequence ID" value="AAR05986.1"/>
    <property type="molecule type" value="mRNA"/>
</dbReference>
<dbReference type="SMR" id="Q69FB6"/>
<dbReference type="GO" id="GO:0005789">
    <property type="term" value="C:endoplasmic reticulum membrane"/>
    <property type="evidence" value="ECO:0007669"/>
    <property type="project" value="UniProtKB-SubCell"/>
</dbReference>
<dbReference type="GO" id="GO:0070330">
    <property type="term" value="F:aromatase activity"/>
    <property type="evidence" value="ECO:0000250"/>
    <property type="project" value="UniProtKB"/>
</dbReference>
<dbReference type="GO" id="GO:0101021">
    <property type="term" value="F:estrogen 2-hydroxylase activity"/>
    <property type="evidence" value="ECO:0007669"/>
    <property type="project" value="RHEA"/>
</dbReference>
<dbReference type="GO" id="GO:0020037">
    <property type="term" value="F:heme binding"/>
    <property type="evidence" value="ECO:0000250"/>
    <property type="project" value="UniProtKB"/>
</dbReference>
<dbReference type="GO" id="GO:0005506">
    <property type="term" value="F:iron ion binding"/>
    <property type="evidence" value="ECO:0007669"/>
    <property type="project" value="InterPro"/>
</dbReference>
<dbReference type="GO" id="GO:0008585">
    <property type="term" value="P:female gonad development"/>
    <property type="evidence" value="ECO:0007669"/>
    <property type="project" value="TreeGrafter"/>
</dbReference>
<dbReference type="GO" id="GO:0006629">
    <property type="term" value="P:lipid metabolic process"/>
    <property type="evidence" value="ECO:0007669"/>
    <property type="project" value="UniProtKB-KW"/>
</dbReference>
<dbReference type="GO" id="GO:0032355">
    <property type="term" value="P:response to estradiol"/>
    <property type="evidence" value="ECO:0007669"/>
    <property type="project" value="TreeGrafter"/>
</dbReference>
<dbReference type="CDD" id="cd20616">
    <property type="entry name" value="CYP19A1"/>
    <property type="match status" value="1"/>
</dbReference>
<dbReference type="FunFam" id="1.10.630.10:FF:000032">
    <property type="entry name" value="Cytochrome P450 aromatase"/>
    <property type="match status" value="1"/>
</dbReference>
<dbReference type="Gene3D" id="1.10.630.10">
    <property type="entry name" value="Cytochrome P450"/>
    <property type="match status" value="1"/>
</dbReference>
<dbReference type="InterPro" id="IPR001128">
    <property type="entry name" value="Cyt_P450"/>
</dbReference>
<dbReference type="InterPro" id="IPR017972">
    <property type="entry name" value="Cyt_P450_CS"/>
</dbReference>
<dbReference type="InterPro" id="IPR002401">
    <property type="entry name" value="Cyt_P450_E_grp-I"/>
</dbReference>
<dbReference type="InterPro" id="IPR036396">
    <property type="entry name" value="Cyt_P450_sf"/>
</dbReference>
<dbReference type="InterPro" id="IPR050196">
    <property type="entry name" value="Cytochrome_P450_Monoox"/>
</dbReference>
<dbReference type="PANTHER" id="PTHR24291:SF43">
    <property type="entry name" value="AROMATASE"/>
    <property type="match status" value="1"/>
</dbReference>
<dbReference type="PANTHER" id="PTHR24291">
    <property type="entry name" value="CYTOCHROME P450 FAMILY 4"/>
    <property type="match status" value="1"/>
</dbReference>
<dbReference type="Pfam" id="PF00067">
    <property type="entry name" value="p450"/>
    <property type="match status" value="1"/>
</dbReference>
<dbReference type="PRINTS" id="PR00463">
    <property type="entry name" value="EP450I"/>
</dbReference>
<dbReference type="PRINTS" id="PR00385">
    <property type="entry name" value="P450"/>
</dbReference>
<dbReference type="SUPFAM" id="SSF48264">
    <property type="entry name" value="Cytochrome P450"/>
    <property type="match status" value="1"/>
</dbReference>
<dbReference type="PROSITE" id="PS00086">
    <property type="entry name" value="CYTOCHROME_P450"/>
    <property type="match status" value="1"/>
</dbReference>
<feature type="chain" id="PRO_0000051956" description="Aromatase">
    <location>
        <begin position="1"/>
        <end position="503"/>
    </location>
</feature>
<feature type="transmembrane region" description="Helical" evidence="3">
    <location>
        <begin position="19"/>
        <end position="39"/>
    </location>
</feature>
<feature type="transmembrane region" description="Helical" evidence="3">
    <location>
        <begin position="51"/>
        <end position="71"/>
    </location>
</feature>
<feature type="transmembrane region" description="Helical" evidence="3">
    <location>
        <begin position="303"/>
        <end position="323"/>
    </location>
</feature>
<feature type="binding site" evidence="1">
    <location>
        <position position="309"/>
    </location>
    <ligand>
        <name>substrate</name>
    </ligand>
</feature>
<feature type="binding site" evidence="1">
    <location>
        <position position="374"/>
    </location>
    <ligand>
        <name>substrate</name>
    </ligand>
</feature>
<feature type="binding site" description="axial binding residue" evidence="1">
    <location>
        <position position="437"/>
    </location>
    <ligand>
        <name>heme</name>
        <dbReference type="ChEBI" id="CHEBI:30413"/>
    </ligand>
    <ligandPart>
        <name>Fe</name>
        <dbReference type="ChEBI" id="CHEBI:18248"/>
    </ligandPart>
</feature>
<proteinExistence type="evidence at transcript level"/>
<sequence length="503" mass="57854">MVLEVLNPRHYNITSMVTEVAPVASIAILLLTGFLLLVWNYEDTSSIPGPGYFLGIGPLISHCRFLWMGIGSTCNYYNKTYGEFVRVWICGEETLIISKSSSMFHIMKHSHYTSRFGSKLGLQCIGMHEKGIIFNNNPALWKAVRPFFTKALSGPGLVRMVTVCADSITKHLDRLEEVRNELGYVDVLTLMRRIMLDTSNKLFLGIPLDERAIVVKIQGYFDAWQALLLKPDIFFKISWLCRKYEKSVKDLKDAMEILIEEKRQRISTAEKLEDCMDFATELIFAEKRGDLTKENVDQCILEMLIAAPDTMSVSVFFMLFLIAKHPQVEEAIMKEIQTVVGERDIRIDDMQKLKVVENFIYESMRYQPVVDLVMRKALEDDVIDGYPVKKGTNIILNIGRMHRLEFFPKPNEFTLENFARNVPYRYFQPFGFGPRACAGKYIAMVMMKVTLVTLLRSFHVQTLQGRCIEKMQKKNDLSLHPDETSDLLGMIFIPRNSDKCLDH</sequence>
<name>CP19A_LEUAC</name>
<comment type="function">
    <text evidence="2">A cytochrome P450 monooxygenase that catalyzes the conversion of C19 androgens, androst-4-ene-3,17-dione (androstenedione) and testosterone to the C18 estrogens, estrone and estradiol, respectively. Catalyzes three successive oxidations of C19 androgens: two conventional oxidations at C19 yielding 19-hydroxy and 19-oxo/19-aldehyde derivatives, followed by a third oxidative aromatization step that involves C1-beta hydrogen abstraction combined with cleavage of the C10-C19 bond to yield a phenolic A ring and formic acid. Alternatively, the third oxidative reaction yields a 19-norsteroid and formic acid. Converts dihydrotestosterone to delta1,10-dehydro 19-nordihydrotestosterone and may play a role in homeostasis of this potent androgen. Also displays 2-hydroxylase activity toward estrone. Mechanistically, uses molecular oxygen inserting one oxygen atom into a substrate, and reducing the second into a water molecule, with two electrons provided by NADPH via cytochrome P450 reductase (CPR; NADPH-ferrihemoprotein reductase).</text>
</comment>
<comment type="catalytic activity">
    <reaction evidence="2">
        <text>testosterone + 3 reduced [NADPH--hemoprotein reductase] + 3 O2 = 17beta-estradiol + formate + 3 oxidized [NADPH--hemoprotein reductase] + 4 H2O + 4 H(+)</text>
        <dbReference type="Rhea" id="RHEA:38191"/>
        <dbReference type="Rhea" id="RHEA-COMP:11964"/>
        <dbReference type="Rhea" id="RHEA-COMP:11965"/>
        <dbReference type="ChEBI" id="CHEBI:15377"/>
        <dbReference type="ChEBI" id="CHEBI:15378"/>
        <dbReference type="ChEBI" id="CHEBI:15379"/>
        <dbReference type="ChEBI" id="CHEBI:15740"/>
        <dbReference type="ChEBI" id="CHEBI:16469"/>
        <dbReference type="ChEBI" id="CHEBI:17347"/>
        <dbReference type="ChEBI" id="CHEBI:57618"/>
        <dbReference type="ChEBI" id="CHEBI:58210"/>
        <dbReference type="EC" id="1.14.14.14"/>
    </reaction>
    <physiologicalReaction direction="left-to-right" evidence="2">
        <dbReference type="Rhea" id="RHEA:38192"/>
    </physiologicalReaction>
</comment>
<comment type="catalytic activity">
    <reaction evidence="2">
        <text>androst-4-ene-3,17-dione + 3 reduced [NADPH--hemoprotein reductase] + 3 O2 = estrone + formate + 3 oxidized [NADPH--hemoprotein reductase] + 4 H2O + 4 H(+)</text>
        <dbReference type="Rhea" id="RHEA:38195"/>
        <dbReference type="Rhea" id="RHEA-COMP:11964"/>
        <dbReference type="Rhea" id="RHEA-COMP:11965"/>
        <dbReference type="ChEBI" id="CHEBI:15377"/>
        <dbReference type="ChEBI" id="CHEBI:15378"/>
        <dbReference type="ChEBI" id="CHEBI:15379"/>
        <dbReference type="ChEBI" id="CHEBI:15740"/>
        <dbReference type="ChEBI" id="CHEBI:16422"/>
        <dbReference type="ChEBI" id="CHEBI:17263"/>
        <dbReference type="ChEBI" id="CHEBI:57618"/>
        <dbReference type="ChEBI" id="CHEBI:58210"/>
        <dbReference type="EC" id="1.14.14.14"/>
    </reaction>
    <physiologicalReaction direction="left-to-right" evidence="2">
        <dbReference type="Rhea" id="RHEA:38196"/>
    </physiologicalReaction>
</comment>
<comment type="catalytic activity">
    <reaction evidence="2">
        <text>androst-4-ene-3,17-dione + reduced [NADPH--hemoprotein reductase] + O2 = 19-hydroxyandrost-4-ene-3,17-dione + oxidized [NADPH--hemoprotein reductase] + H2O + H(+)</text>
        <dbReference type="Rhea" id="RHEA:38199"/>
        <dbReference type="Rhea" id="RHEA-COMP:11964"/>
        <dbReference type="Rhea" id="RHEA-COMP:11965"/>
        <dbReference type="ChEBI" id="CHEBI:15377"/>
        <dbReference type="ChEBI" id="CHEBI:15378"/>
        <dbReference type="ChEBI" id="CHEBI:15379"/>
        <dbReference type="ChEBI" id="CHEBI:16422"/>
        <dbReference type="ChEBI" id="CHEBI:27576"/>
        <dbReference type="ChEBI" id="CHEBI:57618"/>
        <dbReference type="ChEBI" id="CHEBI:58210"/>
    </reaction>
    <physiologicalReaction direction="left-to-right" evidence="2">
        <dbReference type="Rhea" id="RHEA:38200"/>
    </physiologicalReaction>
</comment>
<comment type="catalytic activity">
    <reaction evidence="2">
        <text>19-hydroxyandrost-4-ene-3,17-dione + reduced [NADPH--hemoprotein reductase] + O2 = 19-oxo-androst-4-ene-3,17-dione + oxidized [NADPH--hemoprotein reductase] + 2 H2O + H(+)</text>
        <dbReference type="Rhea" id="RHEA:38203"/>
        <dbReference type="Rhea" id="RHEA-COMP:11964"/>
        <dbReference type="Rhea" id="RHEA-COMP:11965"/>
        <dbReference type="ChEBI" id="CHEBI:799"/>
        <dbReference type="ChEBI" id="CHEBI:15377"/>
        <dbReference type="ChEBI" id="CHEBI:15378"/>
        <dbReference type="ChEBI" id="CHEBI:15379"/>
        <dbReference type="ChEBI" id="CHEBI:27576"/>
        <dbReference type="ChEBI" id="CHEBI:57618"/>
        <dbReference type="ChEBI" id="CHEBI:58210"/>
    </reaction>
    <physiologicalReaction direction="left-to-right" evidence="2">
        <dbReference type="Rhea" id="RHEA:38204"/>
    </physiologicalReaction>
</comment>
<comment type="catalytic activity">
    <reaction evidence="2">
        <text>19-oxo-androst-4-ene-3,17-dione + reduced [NADPH--hemoprotein reductase] + O2 = estrone + formate + oxidized [NADPH--hemoprotein reductase] + H2O + 2 H(+)</text>
        <dbReference type="Rhea" id="RHEA:38207"/>
        <dbReference type="Rhea" id="RHEA-COMP:11964"/>
        <dbReference type="Rhea" id="RHEA-COMP:11965"/>
        <dbReference type="ChEBI" id="CHEBI:799"/>
        <dbReference type="ChEBI" id="CHEBI:15377"/>
        <dbReference type="ChEBI" id="CHEBI:15378"/>
        <dbReference type="ChEBI" id="CHEBI:15379"/>
        <dbReference type="ChEBI" id="CHEBI:15740"/>
        <dbReference type="ChEBI" id="CHEBI:17263"/>
        <dbReference type="ChEBI" id="CHEBI:57618"/>
        <dbReference type="ChEBI" id="CHEBI:58210"/>
    </reaction>
    <physiologicalReaction direction="left-to-right" evidence="2">
        <dbReference type="Rhea" id="RHEA:38208"/>
    </physiologicalReaction>
</comment>
<comment type="catalytic activity">
    <reaction evidence="2">
        <text>estrone + reduced [NADPH--hemoprotein reductase] + O2 = 2-hydroxyestrone + oxidized [NADPH--hemoprotein reductase] + H2O + H(+)</text>
        <dbReference type="Rhea" id="RHEA:47208"/>
        <dbReference type="Rhea" id="RHEA-COMP:11964"/>
        <dbReference type="Rhea" id="RHEA-COMP:11965"/>
        <dbReference type="ChEBI" id="CHEBI:1156"/>
        <dbReference type="ChEBI" id="CHEBI:15377"/>
        <dbReference type="ChEBI" id="CHEBI:15378"/>
        <dbReference type="ChEBI" id="CHEBI:15379"/>
        <dbReference type="ChEBI" id="CHEBI:17263"/>
        <dbReference type="ChEBI" id="CHEBI:57618"/>
        <dbReference type="ChEBI" id="CHEBI:58210"/>
    </reaction>
    <physiologicalReaction direction="left-to-right" evidence="2">
        <dbReference type="Rhea" id="RHEA:47209"/>
    </physiologicalReaction>
</comment>
<comment type="catalytic activity">
    <reaction evidence="2">
        <text>17beta-hydroxy-5alpha-androstan-3-one + reduced [NADPH--hemoprotein reductase] + O2 = 17beta,19-dihydroxy-3-oxo-5alpha-androstanone + oxidized [NADPH--hemoprotein reductase] + H2O + H(+)</text>
        <dbReference type="Rhea" id="RHEA:53200"/>
        <dbReference type="Rhea" id="RHEA-COMP:11964"/>
        <dbReference type="Rhea" id="RHEA-COMP:11965"/>
        <dbReference type="ChEBI" id="CHEBI:15377"/>
        <dbReference type="ChEBI" id="CHEBI:15378"/>
        <dbReference type="ChEBI" id="CHEBI:15379"/>
        <dbReference type="ChEBI" id="CHEBI:16330"/>
        <dbReference type="ChEBI" id="CHEBI:57618"/>
        <dbReference type="ChEBI" id="CHEBI:58210"/>
        <dbReference type="ChEBI" id="CHEBI:137031"/>
    </reaction>
    <physiologicalReaction direction="left-to-right" evidence="2">
        <dbReference type="Rhea" id="RHEA:53201"/>
    </physiologicalReaction>
</comment>
<comment type="catalytic activity">
    <reaction evidence="2">
        <text>17beta,19-dihydroxy-3-oxo-5alpha-androstanone + reduced [NADPH--hemoprotein reductase] + O2 = 17beta-hydroxy-3,19-dioxo-5alpha-androstanone + oxidized [NADPH--hemoprotein reductase] + 2 H2O + H(+)</text>
        <dbReference type="Rhea" id="RHEA:53204"/>
        <dbReference type="Rhea" id="RHEA-COMP:11964"/>
        <dbReference type="Rhea" id="RHEA-COMP:11965"/>
        <dbReference type="ChEBI" id="CHEBI:15377"/>
        <dbReference type="ChEBI" id="CHEBI:15378"/>
        <dbReference type="ChEBI" id="CHEBI:15379"/>
        <dbReference type="ChEBI" id="CHEBI:57618"/>
        <dbReference type="ChEBI" id="CHEBI:58210"/>
        <dbReference type="ChEBI" id="CHEBI:137031"/>
        <dbReference type="ChEBI" id="CHEBI:137032"/>
    </reaction>
    <physiologicalReaction direction="left-to-right" evidence="2">
        <dbReference type="Rhea" id="RHEA:53205"/>
    </physiologicalReaction>
</comment>
<comment type="catalytic activity">
    <reaction evidence="2">
        <text>17beta-hydroxy-3,19-dioxo-5alpha-androstanone + reduced [NADPH--hemoprotein reductase] + O2 = 17beta-hydroxy-3-oxo-19-nor-5alpha-androst-1-ene + formate + oxidized [NADPH--hemoprotein reductase] + H2O + 2 H(+)</text>
        <dbReference type="Rhea" id="RHEA:53276"/>
        <dbReference type="Rhea" id="RHEA-COMP:11964"/>
        <dbReference type="Rhea" id="RHEA-COMP:11965"/>
        <dbReference type="ChEBI" id="CHEBI:15377"/>
        <dbReference type="ChEBI" id="CHEBI:15378"/>
        <dbReference type="ChEBI" id="CHEBI:15379"/>
        <dbReference type="ChEBI" id="CHEBI:15740"/>
        <dbReference type="ChEBI" id="CHEBI:57618"/>
        <dbReference type="ChEBI" id="CHEBI:58210"/>
        <dbReference type="ChEBI" id="CHEBI:137032"/>
        <dbReference type="ChEBI" id="CHEBI:137110"/>
    </reaction>
    <physiologicalReaction direction="left-to-right" evidence="2">
        <dbReference type="Rhea" id="RHEA:53277"/>
    </physiologicalReaction>
</comment>
<comment type="cofactor">
    <cofactor evidence="2">
        <name>heme</name>
        <dbReference type="ChEBI" id="CHEBI:30413"/>
    </cofactor>
</comment>
<comment type="pathway">
    <text evidence="2">Steroid hormone biosynthesis.</text>
</comment>
<comment type="subcellular location">
    <subcellularLocation>
        <location evidence="2">Endoplasmic reticulum membrane</location>
        <topology evidence="5">Multi-pass membrane protein</topology>
    </subcellularLocation>
    <subcellularLocation>
        <location evidence="2">Microsome membrane</location>
        <topology evidence="5">Multi-pass membrane protein</topology>
    </subcellularLocation>
</comment>
<comment type="similarity">
    <text evidence="5">Belongs to the cytochrome P450 family.</text>
</comment>
<gene>
    <name type="primary">CYP19A1</name>
    <name type="synonym">CYP19</name>
</gene>
<reference key="1">
    <citation type="journal article" date="2005" name="Gen. Comp. Endocrinol.">
        <title>Characterization of a cetacean aromatase (CYP19) and the phylogeny and functional conservation of vertebrate aromatase.</title>
        <authorList>
            <person name="Wilson J.Y."/>
            <person name="McArthur A.G."/>
            <person name="Stegeman J.J."/>
        </authorList>
    </citation>
    <scope>NUCLEOTIDE SEQUENCE [MRNA]</scope>
    <source>
        <tissue>Ovary</tissue>
    </source>
</reference>